<dbReference type="EMBL" id="AAFI02000174">
    <property type="protein sequence ID" value="EAL61933.1"/>
    <property type="molecule type" value="Genomic_DNA"/>
</dbReference>
<dbReference type="RefSeq" id="XP_635448.1">
    <property type="nucleotide sequence ID" value="XM_630356.1"/>
</dbReference>
<dbReference type="SMR" id="Q54F89"/>
<dbReference type="FunCoup" id="Q54F89">
    <property type="interactions" value="877"/>
</dbReference>
<dbReference type="PaxDb" id="44689-DDB0189207"/>
<dbReference type="EnsemblProtists" id="EAL61933">
    <property type="protein sequence ID" value="EAL61933"/>
    <property type="gene ID" value="DDB_G0291005"/>
</dbReference>
<dbReference type="GeneID" id="8627948"/>
<dbReference type="KEGG" id="ddi:DDB_G0291005"/>
<dbReference type="dictyBase" id="DDB_G0291005"/>
<dbReference type="VEuPathDB" id="AmoebaDB:DDB_G0291005"/>
<dbReference type="eggNOG" id="ENOG502RIJ0">
    <property type="taxonomic scope" value="Eukaryota"/>
</dbReference>
<dbReference type="HOGENOM" id="CLU_938207_0_0_1"/>
<dbReference type="InParanoid" id="Q54F89"/>
<dbReference type="OMA" id="KRSPHNI"/>
<dbReference type="PRO" id="PR:Q54F89"/>
<dbReference type="Proteomes" id="UP000002195">
    <property type="component" value="Chromosome 5"/>
</dbReference>
<name>Y9207_DICDI</name>
<keyword id="KW-1185">Reference proteome</keyword>
<feature type="chain" id="PRO_0000346895" description="Putative uncharacterized protein DDB_G0291005">
    <location>
        <begin position="1"/>
        <end position="297"/>
    </location>
</feature>
<feature type="region of interest" description="Disordered" evidence="1">
    <location>
        <begin position="12"/>
        <end position="43"/>
    </location>
</feature>
<feature type="region of interest" description="Disordered" evidence="1">
    <location>
        <begin position="65"/>
        <end position="85"/>
    </location>
</feature>
<feature type="region of interest" description="Disordered" evidence="1">
    <location>
        <begin position="122"/>
        <end position="151"/>
    </location>
</feature>
<feature type="region of interest" description="Disordered" evidence="1">
    <location>
        <begin position="265"/>
        <end position="297"/>
    </location>
</feature>
<feature type="compositionally biased region" description="Polar residues" evidence="1">
    <location>
        <begin position="65"/>
        <end position="79"/>
    </location>
</feature>
<feature type="compositionally biased region" description="Low complexity" evidence="1">
    <location>
        <begin position="122"/>
        <end position="135"/>
    </location>
</feature>
<feature type="compositionally biased region" description="Polar residues" evidence="1">
    <location>
        <begin position="140"/>
        <end position="151"/>
    </location>
</feature>
<feature type="compositionally biased region" description="Low complexity" evidence="1">
    <location>
        <begin position="268"/>
        <end position="287"/>
    </location>
</feature>
<protein>
    <recommendedName>
        <fullName>Putative uncharacterized protein DDB_G0291005</fullName>
    </recommendedName>
</protein>
<sequence>MNKILNFKKKLQNNNNNTNNNNNNNNPKASILKNNNNDNTNDNLKSKIVVKSTPVIQKSSSFANVPNSINVNTSSSGNKNGDKPILLQSMFNKGKRSNEITNRKIPPPFSEDSFYKSGVTSKVSTTTTTTSSTSKPILPQTITKPNKTNETIVPIPPIKKPISNNNINYNNINIQQSSSTCTISNRVRDNLFLLKEESKSEYNIRVNEIEKKVISNNNIDYNDPYTQTIQKIIMVEKEMIDTFSAMIEFQPLQNLAQTQILKSSSRLSSNNNNNNNNNNNNNNNNSNLLFFFDDQNN</sequence>
<gene>
    <name type="ORF">DDB_G0291005</name>
</gene>
<proteinExistence type="predicted"/>
<reference key="1">
    <citation type="journal article" date="2005" name="Nature">
        <title>The genome of the social amoeba Dictyostelium discoideum.</title>
        <authorList>
            <person name="Eichinger L."/>
            <person name="Pachebat J.A."/>
            <person name="Gloeckner G."/>
            <person name="Rajandream M.A."/>
            <person name="Sucgang R."/>
            <person name="Berriman M."/>
            <person name="Song J."/>
            <person name="Olsen R."/>
            <person name="Szafranski K."/>
            <person name="Xu Q."/>
            <person name="Tunggal B."/>
            <person name="Kummerfeld S."/>
            <person name="Madera M."/>
            <person name="Konfortov B.A."/>
            <person name="Rivero F."/>
            <person name="Bankier A.T."/>
            <person name="Lehmann R."/>
            <person name="Hamlin N."/>
            <person name="Davies R."/>
            <person name="Gaudet P."/>
            <person name="Fey P."/>
            <person name="Pilcher K."/>
            <person name="Chen G."/>
            <person name="Saunders D."/>
            <person name="Sodergren E.J."/>
            <person name="Davis P."/>
            <person name="Kerhornou A."/>
            <person name="Nie X."/>
            <person name="Hall N."/>
            <person name="Anjard C."/>
            <person name="Hemphill L."/>
            <person name="Bason N."/>
            <person name="Farbrother P."/>
            <person name="Desany B."/>
            <person name="Just E."/>
            <person name="Morio T."/>
            <person name="Rost R."/>
            <person name="Churcher C.M."/>
            <person name="Cooper J."/>
            <person name="Haydock S."/>
            <person name="van Driessche N."/>
            <person name="Cronin A."/>
            <person name="Goodhead I."/>
            <person name="Muzny D.M."/>
            <person name="Mourier T."/>
            <person name="Pain A."/>
            <person name="Lu M."/>
            <person name="Harper D."/>
            <person name="Lindsay R."/>
            <person name="Hauser H."/>
            <person name="James K.D."/>
            <person name="Quiles M."/>
            <person name="Madan Babu M."/>
            <person name="Saito T."/>
            <person name="Buchrieser C."/>
            <person name="Wardroper A."/>
            <person name="Felder M."/>
            <person name="Thangavelu M."/>
            <person name="Johnson D."/>
            <person name="Knights A."/>
            <person name="Loulseged H."/>
            <person name="Mungall K.L."/>
            <person name="Oliver K."/>
            <person name="Price C."/>
            <person name="Quail M.A."/>
            <person name="Urushihara H."/>
            <person name="Hernandez J."/>
            <person name="Rabbinowitsch E."/>
            <person name="Steffen D."/>
            <person name="Sanders M."/>
            <person name="Ma J."/>
            <person name="Kohara Y."/>
            <person name="Sharp S."/>
            <person name="Simmonds M.N."/>
            <person name="Spiegler S."/>
            <person name="Tivey A."/>
            <person name="Sugano S."/>
            <person name="White B."/>
            <person name="Walker D."/>
            <person name="Woodward J.R."/>
            <person name="Winckler T."/>
            <person name="Tanaka Y."/>
            <person name="Shaulsky G."/>
            <person name="Schleicher M."/>
            <person name="Weinstock G.M."/>
            <person name="Rosenthal A."/>
            <person name="Cox E.C."/>
            <person name="Chisholm R.L."/>
            <person name="Gibbs R.A."/>
            <person name="Loomis W.F."/>
            <person name="Platzer M."/>
            <person name="Kay R.R."/>
            <person name="Williams J.G."/>
            <person name="Dear P.H."/>
            <person name="Noegel A.A."/>
            <person name="Barrell B.G."/>
            <person name="Kuspa A."/>
        </authorList>
    </citation>
    <scope>NUCLEOTIDE SEQUENCE [LARGE SCALE GENOMIC DNA]</scope>
    <source>
        <strain>AX4</strain>
    </source>
</reference>
<evidence type="ECO:0000256" key="1">
    <source>
        <dbReference type="SAM" id="MobiDB-lite"/>
    </source>
</evidence>
<organism>
    <name type="scientific">Dictyostelium discoideum</name>
    <name type="common">Social amoeba</name>
    <dbReference type="NCBI Taxonomy" id="44689"/>
    <lineage>
        <taxon>Eukaryota</taxon>
        <taxon>Amoebozoa</taxon>
        <taxon>Evosea</taxon>
        <taxon>Eumycetozoa</taxon>
        <taxon>Dictyostelia</taxon>
        <taxon>Dictyosteliales</taxon>
        <taxon>Dictyosteliaceae</taxon>
        <taxon>Dictyostelium</taxon>
    </lineage>
</organism>
<accession>Q54F89</accession>